<name>RL23_THESQ</name>
<gene>
    <name evidence="1" type="primary">rplW</name>
    <name type="ordered locus">TRQ2_1392</name>
</gene>
<accession>B1LBN8</accession>
<comment type="function">
    <text evidence="1">One of the early assembly proteins it binds 23S rRNA. One of the proteins that surrounds the polypeptide exit tunnel on the outside of the ribosome. Forms the main docking site for trigger factor binding to the ribosome.</text>
</comment>
<comment type="subunit">
    <text evidence="1">Part of the 50S ribosomal subunit. Contacts protein L29, and trigger factor when it is bound to the ribosome.</text>
</comment>
<comment type="similarity">
    <text evidence="1">Belongs to the universal ribosomal protein uL23 family.</text>
</comment>
<organism>
    <name type="scientific">Thermotoga sp. (strain RQ2)</name>
    <dbReference type="NCBI Taxonomy" id="126740"/>
    <lineage>
        <taxon>Bacteria</taxon>
        <taxon>Thermotogati</taxon>
        <taxon>Thermotogota</taxon>
        <taxon>Thermotogae</taxon>
        <taxon>Thermotogales</taxon>
        <taxon>Thermotogaceae</taxon>
        <taxon>Thermotoga</taxon>
    </lineage>
</organism>
<keyword id="KW-0687">Ribonucleoprotein</keyword>
<keyword id="KW-0689">Ribosomal protein</keyword>
<keyword id="KW-0694">RNA-binding</keyword>
<keyword id="KW-0699">rRNA-binding</keyword>
<sequence length="100" mass="11715">MKQEKLSLNDVLIRPIITEKALILREQRKYVFEVNPLANKNLVKEAVEKLFNVKVEKVNILNMKPKPKRRGIFEGKTRSWKKAVVTLKEGYTIKELEGEH</sequence>
<proteinExistence type="inferred from homology"/>
<dbReference type="EMBL" id="CP000969">
    <property type="protein sequence ID" value="ACB09736.1"/>
    <property type="molecule type" value="Genomic_DNA"/>
</dbReference>
<dbReference type="RefSeq" id="WP_011943786.1">
    <property type="nucleotide sequence ID" value="NC_010483.1"/>
</dbReference>
<dbReference type="SMR" id="B1LBN8"/>
<dbReference type="KEGG" id="trq:TRQ2_1392"/>
<dbReference type="HOGENOM" id="CLU_037562_3_2_0"/>
<dbReference type="Proteomes" id="UP000001687">
    <property type="component" value="Chromosome"/>
</dbReference>
<dbReference type="GO" id="GO:1990904">
    <property type="term" value="C:ribonucleoprotein complex"/>
    <property type="evidence" value="ECO:0007669"/>
    <property type="project" value="UniProtKB-KW"/>
</dbReference>
<dbReference type="GO" id="GO:0005840">
    <property type="term" value="C:ribosome"/>
    <property type="evidence" value="ECO:0007669"/>
    <property type="project" value="UniProtKB-KW"/>
</dbReference>
<dbReference type="GO" id="GO:0019843">
    <property type="term" value="F:rRNA binding"/>
    <property type="evidence" value="ECO:0007669"/>
    <property type="project" value="UniProtKB-UniRule"/>
</dbReference>
<dbReference type="GO" id="GO:0003735">
    <property type="term" value="F:structural constituent of ribosome"/>
    <property type="evidence" value="ECO:0007669"/>
    <property type="project" value="InterPro"/>
</dbReference>
<dbReference type="GO" id="GO:0006412">
    <property type="term" value="P:translation"/>
    <property type="evidence" value="ECO:0007669"/>
    <property type="project" value="UniProtKB-UniRule"/>
</dbReference>
<dbReference type="FunFam" id="3.30.70.330:FF:000001">
    <property type="entry name" value="50S ribosomal protein L23"/>
    <property type="match status" value="1"/>
</dbReference>
<dbReference type="Gene3D" id="3.30.70.330">
    <property type="match status" value="1"/>
</dbReference>
<dbReference type="HAMAP" id="MF_01369_B">
    <property type="entry name" value="Ribosomal_uL23_B"/>
    <property type="match status" value="1"/>
</dbReference>
<dbReference type="InterPro" id="IPR012677">
    <property type="entry name" value="Nucleotide-bd_a/b_plait_sf"/>
</dbReference>
<dbReference type="InterPro" id="IPR013025">
    <property type="entry name" value="Ribosomal_uL23-like"/>
</dbReference>
<dbReference type="InterPro" id="IPR012678">
    <property type="entry name" value="Ribosomal_uL23/eL15/eS24_sf"/>
</dbReference>
<dbReference type="InterPro" id="IPR001014">
    <property type="entry name" value="Ribosomal_uL23_CS"/>
</dbReference>
<dbReference type="NCBIfam" id="NF004363">
    <property type="entry name" value="PRK05738.2-4"/>
    <property type="match status" value="1"/>
</dbReference>
<dbReference type="NCBIfam" id="NF004366">
    <property type="entry name" value="PRK05738.3-2"/>
    <property type="match status" value="1"/>
</dbReference>
<dbReference type="PANTHER" id="PTHR11620">
    <property type="entry name" value="60S RIBOSOMAL PROTEIN L23A"/>
    <property type="match status" value="1"/>
</dbReference>
<dbReference type="Pfam" id="PF00276">
    <property type="entry name" value="Ribosomal_L23"/>
    <property type="match status" value="1"/>
</dbReference>
<dbReference type="SUPFAM" id="SSF54189">
    <property type="entry name" value="Ribosomal proteins S24e, L23 and L15e"/>
    <property type="match status" value="1"/>
</dbReference>
<dbReference type="PROSITE" id="PS00050">
    <property type="entry name" value="RIBOSOMAL_L23"/>
    <property type="match status" value="1"/>
</dbReference>
<evidence type="ECO:0000255" key="1">
    <source>
        <dbReference type="HAMAP-Rule" id="MF_01369"/>
    </source>
</evidence>
<evidence type="ECO:0000305" key="2"/>
<protein>
    <recommendedName>
        <fullName evidence="1">Large ribosomal subunit protein uL23</fullName>
    </recommendedName>
    <alternativeName>
        <fullName evidence="2">50S ribosomal protein L23</fullName>
    </alternativeName>
</protein>
<reference key="1">
    <citation type="journal article" date="2011" name="J. Bacteriol.">
        <title>Genome sequence of Thermotoga sp. strain RQ2, a hyperthermophilic bacterium isolated from a geothermally heated region of the seafloor near Ribeira Quente, the Azores.</title>
        <authorList>
            <person name="Swithers K.S."/>
            <person name="DiPippo J.L."/>
            <person name="Bruce D.C."/>
            <person name="Detter C."/>
            <person name="Tapia R."/>
            <person name="Han S."/>
            <person name="Saunders E."/>
            <person name="Goodwin L.A."/>
            <person name="Han J."/>
            <person name="Woyke T."/>
            <person name="Pitluck S."/>
            <person name="Pennacchio L."/>
            <person name="Nolan M."/>
            <person name="Mikhailova N."/>
            <person name="Lykidis A."/>
            <person name="Land M.L."/>
            <person name="Brettin T."/>
            <person name="Stetter K.O."/>
            <person name="Nelson K.E."/>
            <person name="Gogarten J.P."/>
            <person name="Noll K.M."/>
        </authorList>
    </citation>
    <scope>NUCLEOTIDE SEQUENCE [LARGE SCALE GENOMIC DNA]</scope>
    <source>
        <strain>RQ2</strain>
    </source>
</reference>
<feature type="chain" id="PRO_1000144617" description="Large ribosomal subunit protein uL23">
    <location>
        <begin position="1"/>
        <end position="100"/>
    </location>
</feature>